<protein>
    <recommendedName>
        <fullName>Subtilisin-like protease 10</fullName>
        <ecNumber>3.4.21.-</ecNumber>
    </recommendedName>
</protein>
<sequence>MFFFKGVVAVLSFFSAVNAAPFMKPNNGTRNYIPDSYIVLLKRDISHDDFELHKRWASDVHKRDVAKRGISFSGIGHSWATGSFRGYSGVFSRDTIEEIMKHEHVAHVERDQIGTSQGWVTQSGAPNWGLGRLSNNSPGNTDYTYDENAGGNGVVYVIDSGIDTMHPEFQGRATWGANFIDKNNVDCWNHGTHCAGIIGSATFGVAKLTALIAVKVLDCNGQGPYSAFVAGLHWATKHAQDNGFIGRAIINFSLGGDNSPAVNQALEEAQRAGIFVSAAAGNFGSDAGSITPGGAGLICVIGNSDDRDYRWTGQGPSNFGARVDIFAPGTNILSTIPGGGSGVMTGTSMAAPHVAGQAAILASISGSGFDLGAACAFFKNSASASVKNPGPNTTNKLLVNGANGTKGPKQGENKPNKPPGQDEQPGQNKPPSQNPPPGQNPPPGQNPPPEQPAPSPPANPGDEPNPDGQPYPGDQPNPGDSGPSWWMPSGGLQPPAWWNRRPSFGGWNRPMWWNRPLSVWKL</sequence>
<reference key="1">
    <citation type="journal article" date="2011" name="Genome Biol.">
        <title>Comparative and functional genomics provide insights into the pathogenicity of dermatophytic fungi.</title>
        <authorList>
            <person name="Burmester A."/>
            <person name="Shelest E."/>
            <person name="Gloeckner G."/>
            <person name="Heddergott C."/>
            <person name="Schindler S."/>
            <person name="Staib P."/>
            <person name="Heidel A."/>
            <person name="Felder M."/>
            <person name="Petzold A."/>
            <person name="Szafranski K."/>
            <person name="Feuermann M."/>
            <person name="Pedruzzi I."/>
            <person name="Priebe S."/>
            <person name="Groth M."/>
            <person name="Winkler R."/>
            <person name="Li W."/>
            <person name="Kniemeyer O."/>
            <person name="Schroeckh V."/>
            <person name="Hertweck C."/>
            <person name="Hube B."/>
            <person name="White T.C."/>
            <person name="Platzer M."/>
            <person name="Guthke R."/>
            <person name="Heitman J."/>
            <person name="Woestemeyer J."/>
            <person name="Zipfel P.F."/>
            <person name="Monod M."/>
            <person name="Brakhage A.A."/>
        </authorList>
    </citation>
    <scope>NUCLEOTIDE SEQUENCE [LARGE SCALE GENOMIC DNA]</scope>
    <source>
        <strain>ATCC MYA-4681 / CBS 112371</strain>
    </source>
</reference>
<organism>
    <name type="scientific">Arthroderma benhamiae (strain ATCC MYA-4681 / CBS 112371)</name>
    <name type="common">Trichophyton mentagrophytes</name>
    <dbReference type="NCBI Taxonomy" id="663331"/>
    <lineage>
        <taxon>Eukaryota</taxon>
        <taxon>Fungi</taxon>
        <taxon>Dikarya</taxon>
        <taxon>Ascomycota</taxon>
        <taxon>Pezizomycotina</taxon>
        <taxon>Eurotiomycetes</taxon>
        <taxon>Eurotiomycetidae</taxon>
        <taxon>Onygenales</taxon>
        <taxon>Arthrodermataceae</taxon>
        <taxon>Trichophyton</taxon>
    </lineage>
</organism>
<dbReference type="EC" id="3.4.21.-"/>
<dbReference type="EMBL" id="ABSU01000005">
    <property type="protein sequence ID" value="EFE34704.1"/>
    <property type="status" value="ALT_FRAME"/>
    <property type="molecule type" value="Genomic_DNA"/>
</dbReference>
<dbReference type="RefSeq" id="XP_003015344.1">
    <property type="nucleotide sequence ID" value="XM_003015298.1"/>
</dbReference>
<dbReference type="SMR" id="D4AQG0"/>
<dbReference type="GlyCosmos" id="D4AQG0">
    <property type="glycosylation" value="3 sites, No reported glycans"/>
</dbReference>
<dbReference type="GeneID" id="9521068"/>
<dbReference type="KEGG" id="abe:ARB_06467"/>
<dbReference type="eggNOG" id="KOG1153">
    <property type="taxonomic scope" value="Eukaryota"/>
</dbReference>
<dbReference type="HOGENOM" id="CLU_011263_1_3_1"/>
<dbReference type="Proteomes" id="UP000008866">
    <property type="component" value="Unassembled WGS sequence"/>
</dbReference>
<dbReference type="GO" id="GO:0005576">
    <property type="term" value="C:extracellular region"/>
    <property type="evidence" value="ECO:0007669"/>
    <property type="project" value="UniProtKB-SubCell"/>
</dbReference>
<dbReference type="GO" id="GO:0004252">
    <property type="term" value="F:serine-type endopeptidase activity"/>
    <property type="evidence" value="ECO:0007669"/>
    <property type="project" value="InterPro"/>
</dbReference>
<dbReference type="GO" id="GO:0006508">
    <property type="term" value="P:proteolysis"/>
    <property type="evidence" value="ECO:0007669"/>
    <property type="project" value="UniProtKB-KW"/>
</dbReference>
<dbReference type="CDD" id="cd04077">
    <property type="entry name" value="Peptidases_S8_PCSK9_ProteinaseK_like"/>
    <property type="match status" value="1"/>
</dbReference>
<dbReference type="Gene3D" id="3.30.70.80">
    <property type="entry name" value="Peptidase S8 propeptide/proteinase inhibitor I9"/>
    <property type="match status" value="1"/>
</dbReference>
<dbReference type="Gene3D" id="3.40.50.200">
    <property type="entry name" value="Peptidase S8/S53 domain"/>
    <property type="match status" value="1"/>
</dbReference>
<dbReference type="InterPro" id="IPR034193">
    <property type="entry name" value="PCSK9_ProteinaseK-like"/>
</dbReference>
<dbReference type="InterPro" id="IPR000209">
    <property type="entry name" value="Peptidase_S8/S53_dom"/>
</dbReference>
<dbReference type="InterPro" id="IPR036852">
    <property type="entry name" value="Peptidase_S8/S53_dom_sf"/>
</dbReference>
<dbReference type="InterPro" id="IPR023827">
    <property type="entry name" value="Peptidase_S8_Asp-AS"/>
</dbReference>
<dbReference type="InterPro" id="IPR022398">
    <property type="entry name" value="Peptidase_S8_His-AS"/>
</dbReference>
<dbReference type="InterPro" id="IPR023828">
    <property type="entry name" value="Peptidase_S8_Ser-AS"/>
</dbReference>
<dbReference type="InterPro" id="IPR050131">
    <property type="entry name" value="Peptidase_S8_subtilisin-like"/>
</dbReference>
<dbReference type="InterPro" id="IPR015500">
    <property type="entry name" value="Peptidase_S8_subtilisin-rel"/>
</dbReference>
<dbReference type="InterPro" id="IPR010259">
    <property type="entry name" value="S8pro/Inhibitor_I9"/>
</dbReference>
<dbReference type="InterPro" id="IPR037045">
    <property type="entry name" value="S8pro/Inhibitor_I9_sf"/>
</dbReference>
<dbReference type="PANTHER" id="PTHR43806:SF58">
    <property type="entry name" value="ALKALINE PROTEASE 1-RELATED"/>
    <property type="match status" value="1"/>
</dbReference>
<dbReference type="PANTHER" id="PTHR43806">
    <property type="entry name" value="PEPTIDASE S8"/>
    <property type="match status" value="1"/>
</dbReference>
<dbReference type="Pfam" id="PF05922">
    <property type="entry name" value="Inhibitor_I9"/>
    <property type="match status" value="1"/>
</dbReference>
<dbReference type="Pfam" id="PF00082">
    <property type="entry name" value="Peptidase_S8"/>
    <property type="match status" value="1"/>
</dbReference>
<dbReference type="PRINTS" id="PR00723">
    <property type="entry name" value="SUBTILISIN"/>
</dbReference>
<dbReference type="SUPFAM" id="SSF54897">
    <property type="entry name" value="Protease propeptides/inhibitors"/>
    <property type="match status" value="1"/>
</dbReference>
<dbReference type="SUPFAM" id="SSF52743">
    <property type="entry name" value="Subtilisin-like"/>
    <property type="match status" value="1"/>
</dbReference>
<dbReference type="PROSITE" id="PS51892">
    <property type="entry name" value="SUBTILASE"/>
    <property type="match status" value="1"/>
</dbReference>
<dbReference type="PROSITE" id="PS00136">
    <property type="entry name" value="SUBTILASE_ASP"/>
    <property type="match status" value="1"/>
</dbReference>
<dbReference type="PROSITE" id="PS00137">
    <property type="entry name" value="SUBTILASE_HIS"/>
    <property type="match status" value="1"/>
</dbReference>
<dbReference type="PROSITE" id="PS00138">
    <property type="entry name" value="SUBTILASE_SER"/>
    <property type="match status" value="1"/>
</dbReference>
<evidence type="ECO:0000250" key="1"/>
<evidence type="ECO:0000255" key="2"/>
<evidence type="ECO:0000255" key="3">
    <source>
        <dbReference type="PROSITE-ProRule" id="PRU01240"/>
    </source>
</evidence>
<evidence type="ECO:0000256" key="4">
    <source>
        <dbReference type="SAM" id="MobiDB-lite"/>
    </source>
</evidence>
<evidence type="ECO:0000305" key="5"/>
<keyword id="KW-0325">Glycoprotein</keyword>
<keyword id="KW-0378">Hydrolase</keyword>
<keyword id="KW-0645">Protease</keyword>
<keyword id="KW-1185">Reference proteome</keyword>
<keyword id="KW-0964">Secreted</keyword>
<keyword id="KW-0720">Serine protease</keyword>
<keyword id="KW-0732">Signal</keyword>
<keyword id="KW-0843">Virulence</keyword>
<keyword id="KW-0865">Zymogen</keyword>
<accession>D4AQG0</accession>
<feature type="signal peptide" evidence="2">
    <location>
        <begin position="1"/>
        <end position="19"/>
    </location>
</feature>
<feature type="propeptide" id="PRO_0000406392" evidence="1">
    <location>
        <begin position="20"/>
        <end position="117"/>
    </location>
</feature>
<feature type="chain" id="PRO_0000406393" description="Subtilisin-like protease 10">
    <location>
        <begin position="118"/>
        <end position="522"/>
    </location>
</feature>
<feature type="domain" description="Inhibitor I9" evidence="2">
    <location>
        <begin position="36"/>
        <end position="113"/>
    </location>
</feature>
<feature type="domain" description="Peptidase S8" evidence="3">
    <location>
        <begin position="127"/>
        <end position="405"/>
    </location>
</feature>
<feature type="region of interest" description="Disordered" evidence="4">
    <location>
        <begin position="384"/>
        <end position="515"/>
    </location>
</feature>
<feature type="compositionally biased region" description="Polar residues" evidence="4">
    <location>
        <begin position="384"/>
        <end position="397"/>
    </location>
</feature>
<feature type="compositionally biased region" description="Pro residues" evidence="4">
    <location>
        <begin position="432"/>
        <end position="459"/>
    </location>
</feature>
<feature type="active site" description="Charge relay system" evidence="3">
    <location>
        <position position="159"/>
    </location>
</feature>
<feature type="active site" description="Charge relay system" evidence="3">
    <location>
        <position position="190"/>
    </location>
</feature>
<feature type="active site" description="Charge relay system" evidence="3">
    <location>
        <position position="348"/>
    </location>
</feature>
<feature type="glycosylation site" description="N-linked (GlcNAc...) asparagine" evidence="2">
    <location>
        <position position="251"/>
    </location>
</feature>
<feature type="glycosylation site" description="N-linked (GlcNAc...) asparagine" evidence="2">
    <location>
        <position position="392"/>
    </location>
</feature>
<feature type="glycosylation site" description="N-linked (GlcNAc...) asparagine" evidence="2">
    <location>
        <position position="403"/>
    </location>
</feature>
<name>SUB10_ARTBC</name>
<gene>
    <name type="primary">SUB10</name>
    <name type="ORF">ARB_06467</name>
</gene>
<comment type="function">
    <text evidence="1">Secreted subtilisin-like serine protease with keratinolytic activity that contributes to pathogenicity.</text>
</comment>
<comment type="subcellular location">
    <subcellularLocation>
        <location evidence="1">Secreted</location>
    </subcellularLocation>
</comment>
<comment type="similarity">
    <text evidence="5">Belongs to the peptidase S8 family.</text>
</comment>
<comment type="sequence caution" evidence="5">
    <conflict type="frameshift">
        <sequence resource="EMBL-CDS" id="EFE34704"/>
    </conflict>
</comment>
<proteinExistence type="inferred from homology"/>